<sequence length="344" mass="37715">MKLKSLVFSLSALFLVLGFTGCKSKAQAKAEQEAQERKAFMAENAKIEKRLMQAKNAATEAEANVYYPEKFAQIEDLEKQSSEAKEQDDLKKANSLGSAAADKYETLANKMKIANQRSKIEANKLAKYDEESYRLGEEAEKKIDGLYKSDSVAALQTSNESLMYYNKVIDAGYKSLSQDAKKTADDAKAALTAVKVAASLKPQQEEADGIYAKAEEAENSAQYEQSYGGYTSAAQAYNDLTQIIKAKRLEAQKAMQAAKTKQELSAKLANEADKESPLPENAEGFSKEPIEVEPLPTDVLNAPQDEKAEETVPVEEMNENSSEEVNGNAEKIESTEEPIEGGVQ</sequence>
<accession>P29721</accession>
<name>TMPA_TREPH</name>
<protein>
    <recommendedName>
        <fullName>Treponemal membrane protein A</fullName>
    </recommendedName>
    <alternativeName>
        <fullName>Antigen TmpA</fullName>
    </alternativeName>
    <alternativeName>
        <fullName>Membrane protein A</fullName>
    </alternativeName>
</protein>
<feature type="signal peptide" evidence="2">
    <location>
        <begin position="1"/>
        <end position="21"/>
    </location>
</feature>
<feature type="chain" id="PRO_0000018198" description="Treponemal membrane protein A">
    <location>
        <begin position="22"/>
        <end position="344"/>
    </location>
</feature>
<feature type="region of interest" description="Disordered" evidence="1">
    <location>
        <begin position="257"/>
        <end position="344"/>
    </location>
</feature>
<feature type="compositionally biased region" description="Basic and acidic residues" evidence="1">
    <location>
        <begin position="260"/>
        <end position="277"/>
    </location>
</feature>
<feature type="compositionally biased region" description="Acidic residues" evidence="1">
    <location>
        <begin position="312"/>
        <end position="322"/>
    </location>
</feature>
<feature type="compositionally biased region" description="Acidic residues" evidence="1">
    <location>
        <begin position="335"/>
        <end position="344"/>
    </location>
</feature>
<feature type="lipid moiety-binding region" description="N-palmitoyl cysteine" evidence="2">
    <location>
        <position position="22"/>
    </location>
</feature>
<feature type="lipid moiety-binding region" description="S-diacylglycerol cysteine" evidence="2">
    <location>
        <position position="22"/>
    </location>
</feature>
<comment type="subcellular location">
    <subcellularLocation>
        <location>Cell membrane</location>
        <topology>Lipid-anchor</topology>
    </subcellularLocation>
</comment>
<comment type="similarity">
    <text evidence="2">To T.pallidum TmpA.</text>
</comment>
<proteinExistence type="predicted"/>
<reference key="1">
    <citation type="journal article" date="1991" name="Infect. Immun.">
        <title>Treponema phagedenis encodes and expresses homologs of the Treponema pallidum TmpA and TmpB proteins.</title>
        <authorList>
            <person name="Yelton D.B."/>
            <person name="Limberger R.J."/>
            <person name="Curci K."/>
            <person name="Malinosky-Rummell F."/>
            <person name="Sliviensky L."/>
            <person name="Schouls L.M."/>
            <person name="van Embden J.D.A."/>
            <person name="Charon N.W."/>
        </authorList>
    </citation>
    <scope>NUCLEOTIDE SEQUENCE [GENOMIC DNA]</scope>
    <source>
        <strain>Kazan 5</strain>
    </source>
</reference>
<dbReference type="EMBL" id="M58475">
    <property type="protein sequence ID" value="AAA27482.1"/>
    <property type="molecule type" value="Genomic_DNA"/>
</dbReference>
<dbReference type="PIR" id="A43592">
    <property type="entry name" value="A43592"/>
</dbReference>
<dbReference type="SMR" id="P29721"/>
<dbReference type="GO" id="GO:0005886">
    <property type="term" value="C:plasma membrane"/>
    <property type="evidence" value="ECO:0007669"/>
    <property type="project" value="UniProtKB-SubCell"/>
</dbReference>
<dbReference type="PROSITE" id="PS51257">
    <property type="entry name" value="PROKAR_LIPOPROTEIN"/>
    <property type="match status" value="1"/>
</dbReference>
<gene>
    <name type="primary">tmpA</name>
</gene>
<evidence type="ECO:0000256" key="1">
    <source>
        <dbReference type="SAM" id="MobiDB-lite"/>
    </source>
</evidence>
<evidence type="ECO:0000305" key="2"/>
<organism>
    <name type="scientific">Treponema phagedenis</name>
    <dbReference type="NCBI Taxonomy" id="162"/>
    <lineage>
        <taxon>Bacteria</taxon>
        <taxon>Pseudomonadati</taxon>
        <taxon>Spirochaetota</taxon>
        <taxon>Spirochaetia</taxon>
        <taxon>Spirochaetales</taxon>
        <taxon>Treponemataceae</taxon>
        <taxon>Treponema</taxon>
    </lineage>
</organism>
<keyword id="KW-1003">Cell membrane</keyword>
<keyword id="KW-0449">Lipoprotein</keyword>
<keyword id="KW-0472">Membrane</keyword>
<keyword id="KW-0564">Palmitate</keyword>
<keyword id="KW-0732">Signal</keyword>